<dbReference type="EC" id="3.2.2.9" evidence="1"/>
<dbReference type="EMBL" id="FM180568">
    <property type="protein sequence ID" value="CAS07714.1"/>
    <property type="molecule type" value="Genomic_DNA"/>
</dbReference>
<dbReference type="RefSeq" id="WP_000689844.1">
    <property type="nucleotide sequence ID" value="NC_011601.1"/>
</dbReference>
<dbReference type="SMR" id="B7UIK6"/>
<dbReference type="GeneID" id="93777267"/>
<dbReference type="KEGG" id="ecg:E2348C_0166"/>
<dbReference type="HOGENOM" id="CLU_031248_2_2_6"/>
<dbReference type="UniPathway" id="UPA00904">
    <property type="reaction ID" value="UER00871"/>
</dbReference>
<dbReference type="Proteomes" id="UP000008205">
    <property type="component" value="Chromosome"/>
</dbReference>
<dbReference type="GO" id="GO:0005829">
    <property type="term" value="C:cytosol"/>
    <property type="evidence" value="ECO:0007669"/>
    <property type="project" value="TreeGrafter"/>
</dbReference>
<dbReference type="GO" id="GO:0008782">
    <property type="term" value="F:adenosylhomocysteine nucleosidase activity"/>
    <property type="evidence" value="ECO:0007669"/>
    <property type="project" value="UniProtKB-UniRule"/>
</dbReference>
<dbReference type="GO" id="GO:0008930">
    <property type="term" value="F:methylthioadenosine nucleosidase activity"/>
    <property type="evidence" value="ECO:0007669"/>
    <property type="project" value="UniProtKB-UniRule"/>
</dbReference>
<dbReference type="GO" id="GO:0019509">
    <property type="term" value="P:L-methionine salvage from methylthioadenosine"/>
    <property type="evidence" value="ECO:0007669"/>
    <property type="project" value="UniProtKB-UniRule"/>
</dbReference>
<dbReference type="GO" id="GO:0019284">
    <property type="term" value="P:L-methionine salvage from S-adenosylmethionine"/>
    <property type="evidence" value="ECO:0007669"/>
    <property type="project" value="TreeGrafter"/>
</dbReference>
<dbReference type="GO" id="GO:0046124">
    <property type="term" value="P:purine deoxyribonucleoside catabolic process"/>
    <property type="evidence" value="ECO:0007669"/>
    <property type="project" value="UniProtKB-UniRule"/>
</dbReference>
<dbReference type="CDD" id="cd09008">
    <property type="entry name" value="MTAN"/>
    <property type="match status" value="1"/>
</dbReference>
<dbReference type="FunFam" id="3.40.50.1580:FF:000001">
    <property type="entry name" value="MTA/SAH nucleosidase family protein"/>
    <property type="match status" value="1"/>
</dbReference>
<dbReference type="Gene3D" id="3.40.50.1580">
    <property type="entry name" value="Nucleoside phosphorylase domain"/>
    <property type="match status" value="1"/>
</dbReference>
<dbReference type="HAMAP" id="MF_01684">
    <property type="entry name" value="Salvage_MtnN"/>
    <property type="match status" value="1"/>
</dbReference>
<dbReference type="InterPro" id="IPR010049">
    <property type="entry name" value="MTA_SAH_Nsdase"/>
</dbReference>
<dbReference type="InterPro" id="IPR000845">
    <property type="entry name" value="Nucleoside_phosphorylase_d"/>
</dbReference>
<dbReference type="InterPro" id="IPR035994">
    <property type="entry name" value="Nucleoside_phosphorylase_sf"/>
</dbReference>
<dbReference type="NCBIfam" id="TIGR01704">
    <property type="entry name" value="MTA_SAH-Nsdase"/>
    <property type="match status" value="1"/>
</dbReference>
<dbReference type="NCBIfam" id="NF004079">
    <property type="entry name" value="PRK05584.1"/>
    <property type="match status" value="1"/>
</dbReference>
<dbReference type="PANTHER" id="PTHR46832">
    <property type="entry name" value="5'-METHYLTHIOADENOSINE/S-ADENOSYLHOMOCYSTEINE NUCLEOSIDASE"/>
    <property type="match status" value="1"/>
</dbReference>
<dbReference type="PANTHER" id="PTHR46832:SF1">
    <property type="entry name" value="5'-METHYLTHIOADENOSINE_S-ADENOSYLHOMOCYSTEINE NUCLEOSIDASE"/>
    <property type="match status" value="1"/>
</dbReference>
<dbReference type="Pfam" id="PF01048">
    <property type="entry name" value="PNP_UDP_1"/>
    <property type="match status" value="1"/>
</dbReference>
<dbReference type="SUPFAM" id="SSF53167">
    <property type="entry name" value="Purine and uridine phosphorylases"/>
    <property type="match status" value="1"/>
</dbReference>
<name>MTNN_ECO27</name>
<evidence type="ECO:0000255" key="1">
    <source>
        <dbReference type="HAMAP-Rule" id="MF_01684"/>
    </source>
</evidence>
<reference key="1">
    <citation type="journal article" date="2009" name="J. Bacteriol.">
        <title>Complete genome sequence and comparative genome analysis of enteropathogenic Escherichia coli O127:H6 strain E2348/69.</title>
        <authorList>
            <person name="Iguchi A."/>
            <person name="Thomson N.R."/>
            <person name="Ogura Y."/>
            <person name="Saunders D."/>
            <person name="Ooka T."/>
            <person name="Henderson I.R."/>
            <person name="Harris D."/>
            <person name="Asadulghani M."/>
            <person name="Kurokawa K."/>
            <person name="Dean P."/>
            <person name="Kenny B."/>
            <person name="Quail M.A."/>
            <person name="Thurston S."/>
            <person name="Dougan G."/>
            <person name="Hayashi T."/>
            <person name="Parkhill J."/>
            <person name="Frankel G."/>
        </authorList>
    </citation>
    <scope>NUCLEOTIDE SEQUENCE [LARGE SCALE GENOMIC DNA]</scope>
    <source>
        <strain>E2348/69 / EPEC</strain>
    </source>
</reference>
<gene>
    <name evidence="1" type="primary">mtnN</name>
    <name type="ordered locus">E2348C_0166</name>
</gene>
<feature type="chain" id="PRO_1000187416" description="5'-methylthioadenosine/S-adenosylhomocysteine nucleosidase">
    <location>
        <begin position="1"/>
        <end position="232"/>
    </location>
</feature>
<feature type="active site" description="Proton acceptor" evidence="1">
    <location>
        <position position="12"/>
    </location>
</feature>
<feature type="active site" description="Proton donor" evidence="1">
    <location>
        <position position="197"/>
    </location>
</feature>
<feature type="binding site" evidence="1">
    <location>
        <position position="78"/>
    </location>
    <ligand>
        <name>substrate</name>
    </ligand>
</feature>
<feature type="binding site" evidence="1">
    <location>
        <position position="152"/>
    </location>
    <ligand>
        <name>substrate</name>
    </ligand>
</feature>
<feature type="binding site" evidence="1">
    <location>
        <begin position="173"/>
        <end position="174"/>
    </location>
    <ligand>
        <name>substrate</name>
    </ligand>
</feature>
<protein>
    <recommendedName>
        <fullName evidence="1">5'-methylthioadenosine/S-adenosylhomocysteine nucleosidase</fullName>
        <shortName evidence="1">MTA/SAH nucleosidase</shortName>
        <shortName evidence="1">MTAN</shortName>
        <ecNumber evidence="1">3.2.2.9</ecNumber>
    </recommendedName>
    <alternativeName>
        <fullName evidence="1">5'-deoxyadenosine nucleosidase</fullName>
        <shortName evidence="1">DOA nucleosidase</shortName>
        <shortName evidence="1">dAdo nucleosidase</shortName>
    </alternativeName>
    <alternativeName>
        <fullName evidence="1">5'-methylthioadenosine nucleosidase</fullName>
        <shortName evidence="1">MTA nucleosidase</shortName>
    </alternativeName>
    <alternativeName>
        <fullName evidence="1">S-adenosylhomocysteine nucleosidase</fullName>
        <shortName evidence="1">AdoHcy nucleosidase</shortName>
        <shortName evidence="1">SAH nucleosidase</shortName>
        <shortName evidence="1">SRH nucleosidase</shortName>
    </alternativeName>
</protein>
<sequence length="232" mass="24354">MKIGIIGAMEEEVTLLRDKIENRQTISLGGCEIYTGQLNGTEVALLKSGIGKVAAALGATLLLEHCKPDVIINTGSAGGLAPTLKVGDIVVSDEARYHDADVTAFGYEYGQLPGCPAGFKADDKLIAAAEACIAELNLNAVRGLIVSGDAFINGSVGLAKIRHNFPQAIAVEMEATAIAHVCHNFNVPFVVVRAISDVADQQSHLSFDEFLAVAAKQSSLMVESLVQKLAHG</sequence>
<comment type="function">
    <text evidence="1">Catalyzes the irreversible cleavage of the glycosidic bond in both 5'-methylthioadenosine (MTA) and S-adenosylhomocysteine (SAH/AdoHcy) to adenine and the corresponding thioribose, 5'-methylthioribose and S-ribosylhomocysteine, respectively. Also cleaves 5'-deoxyadenosine, a toxic by-product of radical S-adenosylmethionine (SAM) enzymes, into 5-deoxyribose and adenine. Thus, is required for in vivo function of the radical SAM enzymes biotin synthase and lipoic acid synthase, that are inhibited by 5'-deoxyadenosine accumulation.</text>
</comment>
<comment type="catalytic activity">
    <reaction evidence="1">
        <text>S-adenosyl-L-homocysteine + H2O = S-(5-deoxy-D-ribos-5-yl)-L-homocysteine + adenine</text>
        <dbReference type="Rhea" id="RHEA:17805"/>
        <dbReference type="ChEBI" id="CHEBI:15377"/>
        <dbReference type="ChEBI" id="CHEBI:16708"/>
        <dbReference type="ChEBI" id="CHEBI:57856"/>
        <dbReference type="ChEBI" id="CHEBI:58195"/>
        <dbReference type="EC" id="3.2.2.9"/>
    </reaction>
</comment>
<comment type="catalytic activity">
    <reaction evidence="1">
        <text>S-methyl-5'-thioadenosine + H2O = 5-(methylsulfanyl)-D-ribose + adenine</text>
        <dbReference type="Rhea" id="RHEA:13617"/>
        <dbReference type="ChEBI" id="CHEBI:15377"/>
        <dbReference type="ChEBI" id="CHEBI:16708"/>
        <dbReference type="ChEBI" id="CHEBI:17509"/>
        <dbReference type="ChEBI" id="CHEBI:78440"/>
        <dbReference type="EC" id="3.2.2.9"/>
    </reaction>
</comment>
<comment type="catalytic activity">
    <reaction evidence="1">
        <text>5'-deoxyadenosine + H2O = 5-deoxy-D-ribose + adenine</text>
        <dbReference type="Rhea" id="RHEA:29859"/>
        <dbReference type="ChEBI" id="CHEBI:15377"/>
        <dbReference type="ChEBI" id="CHEBI:16708"/>
        <dbReference type="ChEBI" id="CHEBI:17319"/>
        <dbReference type="ChEBI" id="CHEBI:149540"/>
        <dbReference type="EC" id="3.2.2.9"/>
    </reaction>
    <physiologicalReaction direction="left-to-right" evidence="1">
        <dbReference type="Rhea" id="RHEA:29860"/>
    </physiologicalReaction>
</comment>
<comment type="pathway">
    <text evidence="1">Amino-acid biosynthesis; L-methionine biosynthesis via salvage pathway; S-methyl-5-thio-alpha-D-ribose 1-phosphate from S-methyl-5'-thioadenosine (hydrolase route): step 1/2.</text>
</comment>
<comment type="subunit">
    <text evidence="1">Homodimer.</text>
</comment>
<comment type="similarity">
    <text evidence="1">Belongs to the PNP/UDP phosphorylase family. MtnN subfamily.</text>
</comment>
<accession>B7UIK6</accession>
<proteinExistence type="inferred from homology"/>
<keyword id="KW-0028">Amino-acid biosynthesis</keyword>
<keyword id="KW-0378">Hydrolase</keyword>
<keyword id="KW-0486">Methionine biosynthesis</keyword>
<keyword id="KW-1185">Reference proteome</keyword>
<organism>
    <name type="scientific">Escherichia coli O127:H6 (strain E2348/69 / EPEC)</name>
    <dbReference type="NCBI Taxonomy" id="574521"/>
    <lineage>
        <taxon>Bacteria</taxon>
        <taxon>Pseudomonadati</taxon>
        <taxon>Pseudomonadota</taxon>
        <taxon>Gammaproteobacteria</taxon>
        <taxon>Enterobacterales</taxon>
        <taxon>Enterobacteriaceae</taxon>
        <taxon>Escherichia</taxon>
    </lineage>
</organism>